<organism>
    <name type="scientific">Ostreid herpesvirus 1 (isolate France)</name>
    <name type="common">OsHV-1</name>
    <name type="synonym">Pacific oyster herpesvirus</name>
    <dbReference type="NCBI Taxonomy" id="654903"/>
    <lineage>
        <taxon>Viruses</taxon>
        <taxon>Duplodnaviria</taxon>
        <taxon>Heunggongvirae</taxon>
        <taxon>Peploviricota</taxon>
        <taxon>Herviviricetes</taxon>
        <taxon>Herpesvirales</taxon>
        <taxon>Malacoherpesviridae</taxon>
        <taxon>Ostreavirus</taxon>
        <taxon>Ostreavirus ostreidmalaco1</taxon>
        <taxon>Ostreid herpesvirus 1</taxon>
    </lineage>
</organism>
<name>Y053_OSHVF</name>
<reference key="1">
    <citation type="journal article" date="2005" name="J. Gen. Virol.">
        <title>A novel class of herpesvirus with bivalve hosts.</title>
        <authorList>
            <person name="Davison A.J."/>
            <person name="Trus B.L."/>
            <person name="Cheng N."/>
            <person name="Steven A.C."/>
            <person name="Watson M.S."/>
            <person name="Cunningham C."/>
            <person name="Le Deuff R.M."/>
            <person name="Renault T."/>
        </authorList>
    </citation>
    <scope>NUCLEOTIDE SEQUENCE [LARGE SCALE GENOMIC DNA]</scope>
</reference>
<accession>Q6R7H2</accession>
<sequence>MADKETMKNAIVADLTRIVIWKNMHKNSTDQSEKILLQAINLKSILHRSITGVLDSKNDYEGPAFLELKKLMSYLFAEKPGTGEKKEKDAETDALLHIAQYLRGSEWKKLTVDPANDNILPSQVKENPKKQPAKRKRSTSRPANEKPSAPENKQQEKGDIPDEDKQEQPVKKIRKNSTSAVDGKRKSQAERLAHIKELIEEGDNSKAIAQSHVYLGIKPDELKKLFLVKANTCSICHKPSKKLLNKGCCLFSVNICKKCIGDYMENLHSYMVAKKMGIKPIHCWACSTVQKYEDFIEDDNMFYKRFWYFLLVNGKIALPQTNKDKLRPVVDWLLACDKIDEEDKDKIRLYLPKSAAARKKARSTSTVIEKNVESETKQEETETITPKPAEDETPPMKEEVIEMKPPTPPEPVIKEEEEKVSEEPEIPPIKEIEDKVEPMVEDTPEEDKVAESMADFEPIDFSTMLDEDEKPQVNYYGSPIGHVSDDDDEIKEVAGGNAVQEADTESMDDFMDYFN</sequence>
<evidence type="ECO:0000256" key="1">
    <source>
        <dbReference type="SAM" id="MobiDB-lite"/>
    </source>
</evidence>
<dbReference type="EMBL" id="AY509253">
    <property type="protein sequence ID" value="AAS00943.1"/>
    <property type="molecule type" value="Genomic_DNA"/>
</dbReference>
<dbReference type="RefSeq" id="YP_024596.1">
    <property type="nucleotide sequence ID" value="NC_005881.2"/>
</dbReference>
<dbReference type="KEGG" id="vg:2948196"/>
<dbReference type="Proteomes" id="UP000007021">
    <property type="component" value="Segment"/>
</dbReference>
<feature type="chain" id="PRO_0000385079" description="Uncharacterized protein ORF53">
    <location>
        <begin position="1"/>
        <end position="515"/>
    </location>
</feature>
<feature type="region of interest" description="Disordered" evidence="1">
    <location>
        <begin position="117"/>
        <end position="188"/>
    </location>
</feature>
<feature type="region of interest" description="Disordered" evidence="1">
    <location>
        <begin position="362"/>
        <end position="453"/>
    </location>
</feature>
<feature type="region of interest" description="Disordered" evidence="1">
    <location>
        <begin position="496"/>
        <end position="515"/>
    </location>
</feature>
<feature type="compositionally biased region" description="Basic and acidic residues" evidence="1">
    <location>
        <begin position="370"/>
        <end position="380"/>
    </location>
</feature>
<feature type="compositionally biased region" description="Basic and acidic residues" evidence="1">
    <location>
        <begin position="388"/>
        <end position="402"/>
    </location>
</feature>
<feature type="compositionally biased region" description="Basic and acidic residues" evidence="1">
    <location>
        <begin position="428"/>
        <end position="438"/>
    </location>
</feature>
<feature type="compositionally biased region" description="Acidic residues" evidence="1">
    <location>
        <begin position="502"/>
        <end position="515"/>
    </location>
</feature>
<keyword id="KW-1185">Reference proteome</keyword>
<organismHost>
    <name type="scientific">Magallana gigas</name>
    <name type="common">Pacific oyster</name>
    <name type="synonym">Crassostrea gigas</name>
    <dbReference type="NCBI Taxonomy" id="29159"/>
</organismHost>
<organismHost>
    <name type="scientific">Pecten maximus</name>
    <name type="common">King scallop</name>
    <name type="synonym">Pilgrim's clam</name>
    <dbReference type="NCBI Taxonomy" id="6579"/>
</organismHost>
<protein>
    <recommendedName>
        <fullName>Uncharacterized protein ORF53</fullName>
    </recommendedName>
</protein>
<gene>
    <name type="ORF">ORF53</name>
</gene>
<proteinExistence type="predicted"/>